<keyword id="KW-0963">Cytoplasm</keyword>
<keyword id="KW-0489">Methyltransferase</keyword>
<keyword id="KW-0949">S-adenosyl-L-methionine</keyword>
<keyword id="KW-0808">Transferase</keyword>
<comment type="catalytic activity">
    <reaction evidence="1">
        <text>S-adenosyl-L-methionine + a thiopurine = S-adenosyl-L-homocysteine + a thiopurine S-methylether.</text>
        <dbReference type="EC" id="2.1.1.67"/>
    </reaction>
</comment>
<comment type="subcellular location">
    <subcellularLocation>
        <location evidence="1">Cytoplasm</location>
    </subcellularLocation>
</comment>
<comment type="similarity">
    <text evidence="1">Belongs to the class I-like SAM-binding methyltransferase superfamily. TPMT family.</text>
</comment>
<dbReference type="EC" id="2.1.1.67" evidence="1"/>
<dbReference type="EMBL" id="AE008923">
    <property type="protein sequence ID" value="AAM36310.1"/>
    <property type="molecule type" value="Genomic_DNA"/>
</dbReference>
<dbReference type="RefSeq" id="WP_011050914.1">
    <property type="nucleotide sequence ID" value="NC_003919.1"/>
</dbReference>
<dbReference type="SMR" id="Q8PMI8"/>
<dbReference type="KEGG" id="xac:XAC1439"/>
<dbReference type="eggNOG" id="COG2265">
    <property type="taxonomic scope" value="Bacteria"/>
</dbReference>
<dbReference type="HOGENOM" id="CLU_085515_1_0_6"/>
<dbReference type="Proteomes" id="UP000000576">
    <property type="component" value="Chromosome"/>
</dbReference>
<dbReference type="GO" id="GO:0005737">
    <property type="term" value="C:cytoplasm"/>
    <property type="evidence" value="ECO:0007669"/>
    <property type="project" value="UniProtKB-SubCell"/>
</dbReference>
<dbReference type="GO" id="GO:0008119">
    <property type="term" value="F:thiopurine S-methyltransferase activity"/>
    <property type="evidence" value="ECO:0007669"/>
    <property type="project" value="UniProtKB-UniRule"/>
</dbReference>
<dbReference type="GO" id="GO:0032259">
    <property type="term" value="P:methylation"/>
    <property type="evidence" value="ECO:0007669"/>
    <property type="project" value="UniProtKB-KW"/>
</dbReference>
<dbReference type="GO" id="GO:0010038">
    <property type="term" value="P:response to metal ion"/>
    <property type="evidence" value="ECO:0007669"/>
    <property type="project" value="InterPro"/>
</dbReference>
<dbReference type="FunFam" id="3.40.50.150:FF:000101">
    <property type="entry name" value="Thiopurine S-methyltransferase"/>
    <property type="match status" value="1"/>
</dbReference>
<dbReference type="Gene3D" id="3.40.50.150">
    <property type="entry name" value="Vaccinia Virus protein VP39"/>
    <property type="match status" value="1"/>
</dbReference>
<dbReference type="HAMAP" id="MF_00812">
    <property type="entry name" value="Thiopur_methtran"/>
    <property type="match status" value="1"/>
</dbReference>
<dbReference type="InterPro" id="IPR029063">
    <property type="entry name" value="SAM-dependent_MTases_sf"/>
</dbReference>
<dbReference type="InterPro" id="IPR022474">
    <property type="entry name" value="Thiopur_S-MeTfrase_Se/Te_detox"/>
</dbReference>
<dbReference type="InterPro" id="IPR025835">
    <property type="entry name" value="Thiopurine_S-MeTrfase"/>
</dbReference>
<dbReference type="InterPro" id="IPR008854">
    <property type="entry name" value="TPMT"/>
</dbReference>
<dbReference type="NCBIfam" id="NF009732">
    <property type="entry name" value="PRK13255.1"/>
    <property type="match status" value="1"/>
</dbReference>
<dbReference type="NCBIfam" id="TIGR03840">
    <property type="entry name" value="TMPT_Se_Te"/>
    <property type="match status" value="1"/>
</dbReference>
<dbReference type="PANTHER" id="PTHR10259">
    <property type="entry name" value="THIOPURINE S-METHYLTRANSFERASE"/>
    <property type="match status" value="1"/>
</dbReference>
<dbReference type="PANTHER" id="PTHR10259:SF11">
    <property type="entry name" value="THIOPURINE S-METHYLTRANSFERASE"/>
    <property type="match status" value="1"/>
</dbReference>
<dbReference type="Pfam" id="PF05724">
    <property type="entry name" value="TPMT"/>
    <property type="match status" value="1"/>
</dbReference>
<dbReference type="PIRSF" id="PIRSF023956">
    <property type="entry name" value="Thiopurine_S-methyltransferase"/>
    <property type="match status" value="1"/>
</dbReference>
<dbReference type="SUPFAM" id="SSF53335">
    <property type="entry name" value="S-adenosyl-L-methionine-dependent methyltransferases"/>
    <property type="match status" value="1"/>
</dbReference>
<dbReference type="PROSITE" id="PS51585">
    <property type="entry name" value="SAM_MT_TPMT"/>
    <property type="match status" value="1"/>
</dbReference>
<sequence>MDTNFWLERWQLGHTGFHQQEVLPLLQKHWHALDLPKESRVLVPLCGKTLDMHWLASQGHRVLGVELSPLAVTQFFDEAGLQPQRHTSAAGEHFIAGPIEIICGDAFALDASVLADCTAVYDRAALVALPAELRQRYLQTVYVQLPTHCRGLLITLEYPQAEKAGPPFSVDATHVHALFDAAWQVDQLERRDILDQEPRFRDEGVTGLSTAVYRLQRR</sequence>
<accession>Q8PMI8</accession>
<name>TPMT_XANAC</name>
<feature type="chain" id="PRO_0000220138" description="Thiopurine S-methyltransferase">
    <location>
        <begin position="1"/>
        <end position="218"/>
    </location>
</feature>
<feature type="binding site" evidence="1">
    <location>
        <position position="10"/>
    </location>
    <ligand>
        <name>S-adenosyl-L-methionine</name>
        <dbReference type="ChEBI" id="CHEBI:59789"/>
    </ligand>
</feature>
<feature type="binding site" evidence="1">
    <location>
        <position position="45"/>
    </location>
    <ligand>
        <name>S-adenosyl-L-methionine</name>
        <dbReference type="ChEBI" id="CHEBI:59789"/>
    </ligand>
</feature>
<feature type="binding site" evidence="1">
    <location>
        <position position="66"/>
    </location>
    <ligand>
        <name>S-adenosyl-L-methionine</name>
        <dbReference type="ChEBI" id="CHEBI:59789"/>
    </ligand>
</feature>
<feature type="binding site" evidence="1">
    <location>
        <position position="123"/>
    </location>
    <ligand>
        <name>S-adenosyl-L-methionine</name>
        <dbReference type="ChEBI" id="CHEBI:59789"/>
    </ligand>
</feature>
<gene>
    <name evidence="1" type="primary">tpm</name>
    <name type="ordered locus">XAC1439</name>
</gene>
<reference key="1">
    <citation type="journal article" date="2002" name="Nature">
        <title>Comparison of the genomes of two Xanthomonas pathogens with differing host specificities.</title>
        <authorList>
            <person name="da Silva A.C.R."/>
            <person name="Ferro J.A."/>
            <person name="Reinach F.C."/>
            <person name="Farah C.S."/>
            <person name="Furlan L.R."/>
            <person name="Quaggio R.B."/>
            <person name="Monteiro-Vitorello C.B."/>
            <person name="Van Sluys M.A."/>
            <person name="Almeida N.F. Jr."/>
            <person name="Alves L.M.C."/>
            <person name="do Amaral A.M."/>
            <person name="Bertolini M.C."/>
            <person name="Camargo L.E.A."/>
            <person name="Camarotte G."/>
            <person name="Cannavan F."/>
            <person name="Cardozo J."/>
            <person name="Chambergo F."/>
            <person name="Ciapina L.P."/>
            <person name="Cicarelli R.M.B."/>
            <person name="Coutinho L.L."/>
            <person name="Cursino-Santos J.R."/>
            <person name="El-Dorry H."/>
            <person name="Faria J.B."/>
            <person name="Ferreira A.J.S."/>
            <person name="Ferreira R.C.C."/>
            <person name="Ferro M.I.T."/>
            <person name="Formighieri E.F."/>
            <person name="Franco M.C."/>
            <person name="Greggio C.C."/>
            <person name="Gruber A."/>
            <person name="Katsuyama A.M."/>
            <person name="Kishi L.T."/>
            <person name="Leite R.P."/>
            <person name="Lemos E.G.M."/>
            <person name="Lemos M.V.F."/>
            <person name="Locali E.C."/>
            <person name="Machado M.A."/>
            <person name="Madeira A.M.B.N."/>
            <person name="Martinez-Rossi N.M."/>
            <person name="Martins E.C."/>
            <person name="Meidanis J."/>
            <person name="Menck C.F.M."/>
            <person name="Miyaki C.Y."/>
            <person name="Moon D.H."/>
            <person name="Moreira L.M."/>
            <person name="Novo M.T.M."/>
            <person name="Okura V.K."/>
            <person name="Oliveira M.C."/>
            <person name="Oliveira V.R."/>
            <person name="Pereira H.A."/>
            <person name="Rossi A."/>
            <person name="Sena J.A.D."/>
            <person name="Silva C."/>
            <person name="de Souza R.F."/>
            <person name="Spinola L.A.F."/>
            <person name="Takita M.A."/>
            <person name="Tamura R.E."/>
            <person name="Teixeira E.C."/>
            <person name="Tezza R.I.D."/>
            <person name="Trindade dos Santos M."/>
            <person name="Truffi D."/>
            <person name="Tsai S.M."/>
            <person name="White F.F."/>
            <person name="Setubal J.C."/>
            <person name="Kitajima J.P."/>
        </authorList>
    </citation>
    <scope>NUCLEOTIDE SEQUENCE [LARGE SCALE GENOMIC DNA]</scope>
    <source>
        <strain>306</strain>
    </source>
</reference>
<evidence type="ECO:0000255" key="1">
    <source>
        <dbReference type="HAMAP-Rule" id="MF_00812"/>
    </source>
</evidence>
<protein>
    <recommendedName>
        <fullName evidence="1">Thiopurine S-methyltransferase</fullName>
        <ecNumber evidence="1">2.1.1.67</ecNumber>
    </recommendedName>
    <alternativeName>
        <fullName evidence="1">Thiopurine methyltransferase</fullName>
    </alternativeName>
</protein>
<proteinExistence type="inferred from homology"/>
<organism>
    <name type="scientific">Xanthomonas axonopodis pv. citri (strain 306)</name>
    <dbReference type="NCBI Taxonomy" id="190486"/>
    <lineage>
        <taxon>Bacteria</taxon>
        <taxon>Pseudomonadati</taxon>
        <taxon>Pseudomonadota</taxon>
        <taxon>Gammaproteobacteria</taxon>
        <taxon>Lysobacterales</taxon>
        <taxon>Lysobacteraceae</taxon>
        <taxon>Xanthomonas</taxon>
    </lineage>
</organism>